<gene>
    <name evidence="1" type="primary">rnfG</name>
    <name type="ordered locus">Sama_1834</name>
</gene>
<feature type="chain" id="PRO_1000014127" description="Ion-translocating oxidoreductase complex subunit G">
    <location>
        <begin position="1"/>
        <end position="215"/>
    </location>
</feature>
<feature type="transmembrane region" description="Helical" evidence="1">
    <location>
        <begin position="9"/>
        <end position="29"/>
    </location>
</feature>
<feature type="modified residue" description="FMN phosphoryl threonine" evidence="1">
    <location>
        <position position="176"/>
    </location>
</feature>
<proteinExistence type="inferred from homology"/>
<reference key="1">
    <citation type="submission" date="2006-12" db="EMBL/GenBank/DDBJ databases">
        <title>Complete sequence of Shewanella amazonensis SB2B.</title>
        <authorList>
            <consortium name="US DOE Joint Genome Institute"/>
            <person name="Copeland A."/>
            <person name="Lucas S."/>
            <person name="Lapidus A."/>
            <person name="Barry K."/>
            <person name="Detter J.C."/>
            <person name="Glavina del Rio T."/>
            <person name="Hammon N."/>
            <person name="Israni S."/>
            <person name="Dalin E."/>
            <person name="Tice H."/>
            <person name="Pitluck S."/>
            <person name="Munk A.C."/>
            <person name="Brettin T."/>
            <person name="Bruce D."/>
            <person name="Han C."/>
            <person name="Tapia R."/>
            <person name="Gilna P."/>
            <person name="Schmutz J."/>
            <person name="Larimer F."/>
            <person name="Land M."/>
            <person name="Hauser L."/>
            <person name="Kyrpides N."/>
            <person name="Mikhailova N."/>
            <person name="Fredrickson J."/>
            <person name="Richardson P."/>
        </authorList>
    </citation>
    <scope>NUCLEOTIDE SEQUENCE [LARGE SCALE GENOMIC DNA]</scope>
    <source>
        <strain>ATCC BAA-1098 / SB2B</strain>
    </source>
</reference>
<accession>A1S6N3</accession>
<organism>
    <name type="scientific">Shewanella amazonensis (strain ATCC BAA-1098 / SB2B)</name>
    <dbReference type="NCBI Taxonomy" id="326297"/>
    <lineage>
        <taxon>Bacteria</taxon>
        <taxon>Pseudomonadati</taxon>
        <taxon>Pseudomonadota</taxon>
        <taxon>Gammaproteobacteria</taxon>
        <taxon>Alteromonadales</taxon>
        <taxon>Shewanellaceae</taxon>
        <taxon>Shewanella</taxon>
    </lineage>
</organism>
<comment type="function">
    <text evidence="1">Part of a membrane-bound complex that couples electron transfer with translocation of ions across the membrane.</text>
</comment>
<comment type="cofactor">
    <cofactor evidence="1">
        <name>FMN</name>
        <dbReference type="ChEBI" id="CHEBI:58210"/>
    </cofactor>
</comment>
<comment type="subunit">
    <text evidence="1">The complex is composed of six subunits: RnfA, RnfB, RnfC, RnfD, RnfE and RnfG.</text>
</comment>
<comment type="subcellular location">
    <subcellularLocation>
        <location evidence="1">Cell inner membrane</location>
        <topology evidence="1">Single-pass membrane protein</topology>
    </subcellularLocation>
</comment>
<comment type="similarity">
    <text evidence="1">Belongs to the RnfG family.</text>
</comment>
<protein>
    <recommendedName>
        <fullName evidence="1">Ion-translocating oxidoreductase complex subunit G</fullName>
        <ecNumber evidence="1">7.-.-.-</ecNumber>
    </recommendedName>
    <alternativeName>
        <fullName evidence="1">Rnf electron transport complex subunit G</fullName>
    </alternativeName>
</protein>
<evidence type="ECO:0000255" key="1">
    <source>
        <dbReference type="HAMAP-Rule" id="MF_00479"/>
    </source>
</evidence>
<dbReference type="EC" id="7.-.-.-" evidence="1"/>
<dbReference type="EMBL" id="CP000507">
    <property type="protein sequence ID" value="ABM00040.1"/>
    <property type="molecule type" value="Genomic_DNA"/>
</dbReference>
<dbReference type="RefSeq" id="WP_011759947.1">
    <property type="nucleotide sequence ID" value="NC_008700.1"/>
</dbReference>
<dbReference type="SMR" id="A1S6N3"/>
<dbReference type="STRING" id="326297.Sama_1834"/>
<dbReference type="KEGG" id="saz:Sama_1834"/>
<dbReference type="eggNOG" id="COG4659">
    <property type="taxonomic scope" value="Bacteria"/>
</dbReference>
<dbReference type="HOGENOM" id="CLU_077882_1_0_6"/>
<dbReference type="OrthoDB" id="9784165at2"/>
<dbReference type="Proteomes" id="UP000009175">
    <property type="component" value="Chromosome"/>
</dbReference>
<dbReference type="GO" id="GO:0005886">
    <property type="term" value="C:plasma membrane"/>
    <property type="evidence" value="ECO:0007669"/>
    <property type="project" value="UniProtKB-SubCell"/>
</dbReference>
<dbReference type="GO" id="GO:0009055">
    <property type="term" value="F:electron transfer activity"/>
    <property type="evidence" value="ECO:0007669"/>
    <property type="project" value="InterPro"/>
</dbReference>
<dbReference type="GO" id="GO:0010181">
    <property type="term" value="F:FMN binding"/>
    <property type="evidence" value="ECO:0007669"/>
    <property type="project" value="InterPro"/>
</dbReference>
<dbReference type="GO" id="GO:0022900">
    <property type="term" value="P:electron transport chain"/>
    <property type="evidence" value="ECO:0007669"/>
    <property type="project" value="UniProtKB-UniRule"/>
</dbReference>
<dbReference type="HAMAP" id="MF_00479">
    <property type="entry name" value="RsxG_RnfG"/>
    <property type="match status" value="1"/>
</dbReference>
<dbReference type="InterPro" id="IPR007329">
    <property type="entry name" value="FMN-bd"/>
</dbReference>
<dbReference type="InterPro" id="IPR010209">
    <property type="entry name" value="Ion_transpt_RnfG/RsxG"/>
</dbReference>
<dbReference type="NCBIfam" id="NF002519">
    <property type="entry name" value="PRK01908.1"/>
    <property type="match status" value="1"/>
</dbReference>
<dbReference type="NCBIfam" id="TIGR01947">
    <property type="entry name" value="rnfG"/>
    <property type="match status" value="1"/>
</dbReference>
<dbReference type="PANTHER" id="PTHR36118">
    <property type="entry name" value="ION-TRANSLOCATING OXIDOREDUCTASE COMPLEX SUBUNIT G"/>
    <property type="match status" value="1"/>
</dbReference>
<dbReference type="PANTHER" id="PTHR36118:SF1">
    <property type="entry name" value="ION-TRANSLOCATING OXIDOREDUCTASE COMPLEX SUBUNIT G"/>
    <property type="match status" value="1"/>
</dbReference>
<dbReference type="Pfam" id="PF04205">
    <property type="entry name" value="FMN_bind"/>
    <property type="match status" value="1"/>
</dbReference>
<dbReference type="PIRSF" id="PIRSF006091">
    <property type="entry name" value="E_trnsport_RnfG"/>
    <property type="match status" value="1"/>
</dbReference>
<dbReference type="SMART" id="SM00900">
    <property type="entry name" value="FMN_bind"/>
    <property type="match status" value="1"/>
</dbReference>
<name>RNFG_SHEAM</name>
<keyword id="KW-0997">Cell inner membrane</keyword>
<keyword id="KW-1003">Cell membrane</keyword>
<keyword id="KW-0249">Electron transport</keyword>
<keyword id="KW-0285">Flavoprotein</keyword>
<keyword id="KW-0288">FMN</keyword>
<keyword id="KW-0472">Membrane</keyword>
<keyword id="KW-0597">Phosphoprotein</keyword>
<keyword id="KW-1185">Reference proteome</keyword>
<keyword id="KW-1278">Translocase</keyword>
<keyword id="KW-0812">Transmembrane</keyword>
<keyword id="KW-1133">Transmembrane helix</keyword>
<keyword id="KW-0813">Transport</keyword>
<sequence>MQKSIIKNGLLLSGFALICTAAVALVNEATKDKIAEQQRLELTRILHQIVPDEIHDNDLGGSCILVHNADALGTDEPMPVYLASSANEPVALAIETIAPDGYNGNIRLIIGVDLKGKVLGVRTLTHQETPGLGDKIELRKSNWVLSFNDKVFSDKANDRWKVKKDGGDFDQFTGATITPRAYLKAVSRTLIFVSANQAEWFNRPLGCDNGANADE</sequence>